<protein>
    <recommendedName>
        <fullName evidence="1">Small ribosomal subunit protein uS13</fullName>
    </recommendedName>
    <alternativeName>
        <fullName evidence="3">30S ribosomal protein S13</fullName>
    </alternativeName>
</protein>
<sequence length="118" mass="13252">MARIAGINIPDHKHTVIALTSIFGIGKTRSQSICASTGIAEHVKISELSEEQIEQLREAVAKFTVEGDLRREVTLSIKRLMDLGTYRGLRHRRGLPVRGQRTKTNARTRKGPRKPIKK</sequence>
<comment type="function">
    <text evidence="1">Located at the top of the head of the 30S subunit, it contacts several helices of the 16S rRNA. In the 70S ribosome it contacts the 23S rRNA (bridge B1a) and protein L5 of the 50S subunit (bridge B1b), connecting the 2 subunits; these bridges are implicated in subunit movement. Contacts the tRNAs in the A and P-sites.</text>
</comment>
<comment type="subunit">
    <text evidence="1">Part of the 30S ribosomal subunit. Forms a loose heterodimer with protein S19. Forms two bridges to the 50S subunit in the 70S ribosome.</text>
</comment>
<comment type="similarity">
    <text evidence="1">Belongs to the universal ribosomal protein uS13 family.</text>
</comment>
<keyword id="KW-0687">Ribonucleoprotein</keyword>
<keyword id="KW-0689">Ribosomal protein</keyword>
<keyword id="KW-0694">RNA-binding</keyword>
<keyword id="KW-0699">rRNA-binding</keyword>
<keyword id="KW-0820">tRNA-binding</keyword>
<proteinExistence type="inferred from homology"/>
<name>RS13_SERP5</name>
<reference key="1">
    <citation type="submission" date="2007-09" db="EMBL/GenBank/DDBJ databases">
        <title>Complete sequence of chromosome of Serratia proteamaculans 568.</title>
        <authorList>
            <consortium name="US DOE Joint Genome Institute"/>
            <person name="Copeland A."/>
            <person name="Lucas S."/>
            <person name="Lapidus A."/>
            <person name="Barry K."/>
            <person name="Glavina del Rio T."/>
            <person name="Dalin E."/>
            <person name="Tice H."/>
            <person name="Pitluck S."/>
            <person name="Chain P."/>
            <person name="Malfatti S."/>
            <person name="Shin M."/>
            <person name="Vergez L."/>
            <person name="Schmutz J."/>
            <person name="Larimer F."/>
            <person name="Land M."/>
            <person name="Hauser L."/>
            <person name="Kyrpides N."/>
            <person name="Kim E."/>
            <person name="Taghavi S."/>
            <person name="Newman L."/>
            <person name="Vangronsveld J."/>
            <person name="van der Lelie D."/>
            <person name="Richardson P."/>
        </authorList>
    </citation>
    <scope>NUCLEOTIDE SEQUENCE [LARGE SCALE GENOMIC DNA]</scope>
    <source>
        <strain>568</strain>
    </source>
</reference>
<organism>
    <name type="scientific">Serratia proteamaculans (strain 568)</name>
    <dbReference type="NCBI Taxonomy" id="399741"/>
    <lineage>
        <taxon>Bacteria</taxon>
        <taxon>Pseudomonadati</taxon>
        <taxon>Pseudomonadota</taxon>
        <taxon>Gammaproteobacteria</taxon>
        <taxon>Enterobacterales</taxon>
        <taxon>Yersiniaceae</taxon>
        <taxon>Serratia</taxon>
    </lineage>
</organism>
<dbReference type="EMBL" id="CP000826">
    <property type="protein sequence ID" value="ABV43616.1"/>
    <property type="molecule type" value="Genomic_DNA"/>
</dbReference>
<dbReference type="SMR" id="A8GKH6"/>
<dbReference type="STRING" id="399741.Spro_4522"/>
<dbReference type="KEGG" id="spe:Spro_4522"/>
<dbReference type="eggNOG" id="COG0099">
    <property type="taxonomic scope" value="Bacteria"/>
</dbReference>
<dbReference type="HOGENOM" id="CLU_103849_1_2_6"/>
<dbReference type="OrthoDB" id="9803610at2"/>
<dbReference type="GO" id="GO:0005829">
    <property type="term" value="C:cytosol"/>
    <property type="evidence" value="ECO:0007669"/>
    <property type="project" value="TreeGrafter"/>
</dbReference>
<dbReference type="GO" id="GO:0015935">
    <property type="term" value="C:small ribosomal subunit"/>
    <property type="evidence" value="ECO:0007669"/>
    <property type="project" value="TreeGrafter"/>
</dbReference>
<dbReference type="GO" id="GO:0019843">
    <property type="term" value="F:rRNA binding"/>
    <property type="evidence" value="ECO:0007669"/>
    <property type="project" value="UniProtKB-UniRule"/>
</dbReference>
<dbReference type="GO" id="GO:0003735">
    <property type="term" value="F:structural constituent of ribosome"/>
    <property type="evidence" value="ECO:0007669"/>
    <property type="project" value="InterPro"/>
</dbReference>
<dbReference type="GO" id="GO:0000049">
    <property type="term" value="F:tRNA binding"/>
    <property type="evidence" value="ECO:0007669"/>
    <property type="project" value="UniProtKB-UniRule"/>
</dbReference>
<dbReference type="GO" id="GO:0006412">
    <property type="term" value="P:translation"/>
    <property type="evidence" value="ECO:0007669"/>
    <property type="project" value="UniProtKB-UniRule"/>
</dbReference>
<dbReference type="FunFam" id="1.10.8.50:FF:000001">
    <property type="entry name" value="30S ribosomal protein S13"/>
    <property type="match status" value="1"/>
</dbReference>
<dbReference type="FunFam" id="4.10.910.10:FF:000001">
    <property type="entry name" value="30S ribosomal protein S13"/>
    <property type="match status" value="1"/>
</dbReference>
<dbReference type="Gene3D" id="1.10.8.50">
    <property type="match status" value="1"/>
</dbReference>
<dbReference type="Gene3D" id="4.10.910.10">
    <property type="entry name" value="30s ribosomal protein s13, domain 2"/>
    <property type="match status" value="1"/>
</dbReference>
<dbReference type="HAMAP" id="MF_01315">
    <property type="entry name" value="Ribosomal_uS13"/>
    <property type="match status" value="1"/>
</dbReference>
<dbReference type="InterPro" id="IPR027437">
    <property type="entry name" value="Rbsml_uS13_C"/>
</dbReference>
<dbReference type="InterPro" id="IPR001892">
    <property type="entry name" value="Ribosomal_uS13"/>
</dbReference>
<dbReference type="InterPro" id="IPR010979">
    <property type="entry name" value="Ribosomal_uS13-like_H2TH"/>
</dbReference>
<dbReference type="InterPro" id="IPR019980">
    <property type="entry name" value="Ribosomal_uS13_bac-type"/>
</dbReference>
<dbReference type="InterPro" id="IPR018269">
    <property type="entry name" value="Ribosomal_uS13_CS"/>
</dbReference>
<dbReference type="NCBIfam" id="TIGR03631">
    <property type="entry name" value="uS13_bact"/>
    <property type="match status" value="1"/>
</dbReference>
<dbReference type="PANTHER" id="PTHR10871">
    <property type="entry name" value="30S RIBOSOMAL PROTEIN S13/40S RIBOSOMAL PROTEIN S18"/>
    <property type="match status" value="1"/>
</dbReference>
<dbReference type="PANTHER" id="PTHR10871:SF1">
    <property type="entry name" value="SMALL RIBOSOMAL SUBUNIT PROTEIN US13M"/>
    <property type="match status" value="1"/>
</dbReference>
<dbReference type="Pfam" id="PF00416">
    <property type="entry name" value="Ribosomal_S13"/>
    <property type="match status" value="1"/>
</dbReference>
<dbReference type="PIRSF" id="PIRSF002134">
    <property type="entry name" value="Ribosomal_S13"/>
    <property type="match status" value="1"/>
</dbReference>
<dbReference type="SUPFAM" id="SSF46946">
    <property type="entry name" value="S13-like H2TH domain"/>
    <property type="match status" value="1"/>
</dbReference>
<dbReference type="PROSITE" id="PS00646">
    <property type="entry name" value="RIBOSOMAL_S13_1"/>
    <property type="match status" value="1"/>
</dbReference>
<dbReference type="PROSITE" id="PS50159">
    <property type="entry name" value="RIBOSOMAL_S13_2"/>
    <property type="match status" value="1"/>
</dbReference>
<evidence type="ECO:0000255" key="1">
    <source>
        <dbReference type="HAMAP-Rule" id="MF_01315"/>
    </source>
</evidence>
<evidence type="ECO:0000256" key="2">
    <source>
        <dbReference type="SAM" id="MobiDB-lite"/>
    </source>
</evidence>
<evidence type="ECO:0000305" key="3"/>
<accession>A8GKH6</accession>
<feature type="chain" id="PRO_1000067520" description="Small ribosomal subunit protein uS13">
    <location>
        <begin position="1"/>
        <end position="118"/>
    </location>
</feature>
<feature type="region of interest" description="Disordered" evidence="2">
    <location>
        <begin position="91"/>
        <end position="118"/>
    </location>
</feature>
<gene>
    <name evidence="1" type="primary">rpsM</name>
    <name type="ordered locus">Spro_4522</name>
</gene>